<proteinExistence type="inferred from homology"/>
<evidence type="ECO:0000255" key="1">
    <source>
        <dbReference type="HAMAP-Rule" id="MF_00465"/>
    </source>
</evidence>
<name>SPED_BUCAI</name>
<dbReference type="EC" id="4.1.1.50" evidence="1"/>
<dbReference type="EMBL" id="BA000003">
    <property type="protein sequence ID" value="BAB12925.1"/>
    <property type="molecule type" value="Genomic_DNA"/>
</dbReference>
<dbReference type="RefSeq" id="NP_240039.1">
    <property type="nucleotide sequence ID" value="NC_002528.1"/>
</dbReference>
<dbReference type="RefSeq" id="WP_010896004.1">
    <property type="nucleotide sequence ID" value="NC_002528.1"/>
</dbReference>
<dbReference type="STRING" id="563178.BUAP5A_205"/>
<dbReference type="EnsemblBacteria" id="BAB12925">
    <property type="protein sequence ID" value="BAB12925"/>
    <property type="gene ID" value="BAB12925"/>
</dbReference>
<dbReference type="KEGG" id="buc:BU208"/>
<dbReference type="PATRIC" id="fig|107806.10.peg.220"/>
<dbReference type="eggNOG" id="COG1586">
    <property type="taxonomic scope" value="Bacteria"/>
</dbReference>
<dbReference type="HOGENOM" id="CLU_092007_0_0_6"/>
<dbReference type="UniPathway" id="UPA00331">
    <property type="reaction ID" value="UER00451"/>
</dbReference>
<dbReference type="Proteomes" id="UP000001806">
    <property type="component" value="Chromosome"/>
</dbReference>
<dbReference type="GO" id="GO:0005829">
    <property type="term" value="C:cytosol"/>
    <property type="evidence" value="ECO:0007669"/>
    <property type="project" value="TreeGrafter"/>
</dbReference>
<dbReference type="GO" id="GO:0004014">
    <property type="term" value="F:adenosylmethionine decarboxylase activity"/>
    <property type="evidence" value="ECO:0007669"/>
    <property type="project" value="UniProtKB-UniRule"/>
</dbReference>
<dbReference type="GO" id="GO:0008295">
    <property type="term" value="P:spermidine biosynthetic process"/>
    <property type="evidence" value="ECO:0007669"/>
    <property type="project" value="UniProtKB-UniRule"/>
</dbReference>
<dbReference type="Gene3D" id="3.60.90.10">
    <property type="entry name" value="S-adenosylmethionine decarboxylase"/>
    <property type="match status" value="1"/>
</dbReference>
<dbReference type="HAMAP" id="MF_00465">
    <property type="entry name" value="AdoMetDC_2"/>
    <property type="match status" value="1"/>
</dbReference>
<dbReference type="InterPro" id="IPR003826">
    <property type="entry name" value="AdoMetDC_fam_prok"/>
</dbReference>
<dbReference type="InterPro" id="IPR009165">
    <property type="entry name" value="S-AdoMet_deCO2ase_bac"/>
</dbReference>
<dbReference type="InterPro" id="IPR016067">
    <property type="entry name" value="S-AdoMet_deCO2ase_core"/>
</dbReference>
<dbReference type="NCBIfam" id="TIGR03331">
    <property type="entry name" value="SAM_DCase_Eco"/>
    <property type="match status" value="1"/>
</dbReference>
<dbReference type="PANTHER" id="PTHR33866">
    <property type="entry name" value="S-ADENOSYLMETHIONINE DECARBOXYLASE PROENZYME"/>
    <property type="match status" value="1"/>
</dbReference>
<dbReference type="PANTHER" id="PTHR33866:SF1">
    <property type="entry name" value="S-ADENOSYLMETHIONINE DECARBOXYLASE PROENZYME"/>
    <property type="match status" value="1"/>
</dbReference>
<dbReference type="Pfam" id="PF02675">
    <property type="entry name" value="AdoMet_dc"/>
    <property type="match status" value="1"/>
</dbReference>
<dbReference type="PIRSF" id="PIRSF001356">
    <property type="entry name" value="SAM_decarboxylas"/>
    <property type="match status" value="1"/>
</dbReference>
<dbReference type="SUPFAM" id="SSF56276">
    <property type="entry name" value="S-adenosylmethionine decarboxylase"/>
    <property type="match status" value="1"/>
</dbReference>
<accession>P57304</accession>
<sequence>MIKLQKLKLYGFNNLTKSLSFCIYDICYANTNDSRNSYISYIDEQYNAIRLTKILKKTCSIIGANVLNIFHQDYEPQGASVTILVCEEPMSMEKIDALNKNIVSSSVLAHLDKSHICVHTYPESHPQSGICTFRADIEVSTCGIISPLNALNYLIHQLESDIVTIEYRVRGFTRDIHGIKHFIDHKINSIQNFMSDDIKSMYDMVDVNVYQENIFHTRMLLREFNLKNYLFNINLENLEKEERSYIKKLLSKEMREIYYGRNISR</sequence>
<keyword id="KW-0068">Autocatalytic cleavage</keyword>
<keyword id="KW-0210">Decarboxylase</keyword>
<keyword id="KW-0456">Lyase</keyword>
<keyword id="KW-0620">Polyamine biosynthesis</keyword>
<keyword id="KW-0670">Pyruvate</keyword>
<keyword id="KW-1185">Reference proteome</keyword>
<keyword id="KW-0949">S-adenosyl-L-methionine</keyword>
<keyword id="KW-0704">Schiff base</keyword>
<keyword id="KW-0745">Spermidine biosynthesis</keyword>
<keyword id="KW-0865">Zymogen</keyword>
<comment type="function">
    <text evidence="1">Catalyzes the decarboxylation of S-adenosylmethionine to S-adenosylmethioninamine (dcAdoMet), the propylamine donor required for the synthesis of the polyamines spermine and spermidine from the diamine putrescine.</text>
</comment>
<comment type="catalytic activity">
    <reaction evidence="1">
        <text>S-adenosyl-L-methionine + H(+) = S-adenosyl 3-(methylsulfanyl)propylamine + CO2</text>
        <dbReference type="Rhea" id="RHEA:15981"/>
        <dbReference type="ChEBI" id="CHEBI:15378"/>
        <dbReference type="ChEBI" id="CHEBI:16526"/>
        <dbReference type="ChEBI" id="CHEBI:57443"/>
        <dbReference type="ChEBI" id="CHEBI:59789"/>
        <dbReference type="EC" id="4.1.1.50"/>
    </reaction>
</comment>
<comment type="cofactor">
    <cofactor evidence="1">
        <name>pyruvate</name>
        <dbReference type="ChEBI" id="CHEBI:15361"/>
    </cofactor>
    <text evidence="1">Binds 1 pyruvoyl group covalently per subunit.</text>
</comment>
<comment type="pathway">
    <text evidence="1">Amine and polyamine biosynthesis; S-adenosylmethioninamine biosynthesis; S-adenosylmethioninamine from S-adenosyl-L-methionine: step 1/1.</text>
</comment>
<comment type="subunit">
    <text evidence="1">Heterooctamer of four alpha and four beta chains arranged as a tetramer of alpha/beta heterodimers.</text>
</comment>
<comment type="PTM">
    <text evidence="1">Is synthesized initially as an inactive proenzyme. Formation of the active enzyme involves a self-maturation process in which the active site pyruvoyl group is generated from an internal serine residue via an autocatalytic post-translational modification. Two non-identical subunits are generated from the proenzyme in this reaction, and the pyruvate is formed at the N-terminus of the alpha chain, which is derived from the carboxyl end of the proenzyme. The post-translation cleavage follows an unusual pathway, termed non-hydrolytic serinolysis, in which the side chain hydroxyl group of the serine supplies its oxygen atom to form the C-terminus of the beta chain, while the remainder of the serine residue undergoes an oxidative deamination to produce ammonia and the pyruvoyl group blocking the N-terminus of the alpha chain.</text>
</comment>
<comment type="similarity">
    <text evidence="1">Belongs to the prokaryotic AdoMetDC family. Type 2 subfamily.</text>
</comment>
<gene>
    <name evidence="1" type="primary">speD</name>
    <name type="ordered locus">BU208</name>
</gene>
<reference key="1">
    <citation type="journal article" date="2000" name="Nature">
        <title>Genome sequence of the endocellular bacterial symbiont of aphids Buchnera sp. APS.</title>
        <authorList>
            <person name="Shigenobu S."/>
            <person name="Watanabe H."/>
            <person name="Hattori M."/>
            <person name="Sakaki Y."/>
            <person name="Ishikawa H."/>
        </authorList>
    </citation>
    <scope>NUCLEOTIDE SEQUENCE [LARGE SCALE GENOMIC DNA]</scope>
    <source>
        <strain>APS</strain>
    </source>
</reference>
<feature type="chain" id="PRO_0000030035" description="S-adenosylmethionine decarboxylase beta chain" evidence="1">
    <location>
        <begin position="1"/>
        <end position="113"/>
    </location>
</feature>
<feature type="chain" id="PRO_0000030036" description="S-adenosylmethionine decarboxylase alpha chain" evidence="1">
    <location>
        <begin position="114"/>
        <end position="265"/>
    </location>
</feature>
<feature type="active site" description="Schiff-base intermediate with substrate; via pyruvic acid" evidence="1">
    <location>
        <position position="114"/>
    </location>
</feature>
<feature type="active site" description="Proton acceptor; for processing activity" evidence="1">
    <location>
        <position position="119"/>
    </location>
</feature>
<feature type="active site" description="Proton donor; for catalytic activity" evidence="1">
    <location>
        <position position="142"/>
    </location>
</feature>
<feature type="site" description="Cleavage (non-hydrolytic); by autolysis" evidence="1">
    <location>
        <begin position="113"/>
        <end position="114"/>
    </location>
</feature>
<feature type="modified residue" description="Pyruvic acid (Ser); by autocatalysis" evidence="1">
    <location>
        <position position="114"/>
    </location>
</feature>
<organism>
    <name type="scientific">Buchnera aphidicola subsp. Acyrthosiphon pisum (strain APS)</name>
    <name type="common">Acyrthosiphon pisum symbiotic bacterium</name>
    <dbReference type="NCBI Taxonomy" id="107806"/>
    <lineage>
        <taxon>Bacteria</taxon>
        <taxon>Pseudomonadati</taxon>
        <taxon>Pseudomonadota</taxon>
        <taxon>Gammaproteobacteria</taxon>
        <taxon>Enterobacterales</taxon>
        <taxon>Erwiniaceae</taxon>
        <taxon>Buchnera</taxon>
    </lineage>
</organism>
<protein>
    <recommendedName>
        <fullName evidence="1">S-adenosylmethionine decarboxylase proenzyme</fullName>
        <shortName evidence="1">AdoMetDC</shortName>
        <shortName evidence="1">SAMDC</shortName>
        <ecNumber evidence="1">4.1.1.50</ecNumber>
    </recommendedName>
    <component>
        <recommendedName>
            <fullName evidence="1">S-adenosylmethionine decarboxylase beta chain</fullName>
        </recommendedName>
    </component>
    <component>
        <recommendedName>
            <fullName evidence="1">S-adenosylmethionine decarboxylase alpha chain</fullName>
        </recommendedName>
    </component>
</protein>